<reference key="1">
    <citation type="journal article" date="2016" name="Genome Announc.">
        <title>Complete genome sequence of Alkaliphilus metalliredigens strain QYMF, an alkaliphilic and metal-reducing bacterium isolated from borax-contaminated leachate ponds.</title>
        <authorList>
            <person name="Hwang C."/>
            <person name="Copeland A."/>
            <person name="Lucas S."/>
            <person name="Lapidus A."/>
            <person name="Barry K."/>
            <person name="Detter J.C."/>
            <person name="Glavina Del Rio T."/>
            <person name="Hammon N."/>
            <person name="Israni S."/>
            <person name="Dalin E."/>
            <person name="Tice H."/>
            <person name="Pitluck S."/>
            <person name="Chertkov O."/>
            <person name="Brettin T."/>
            <person name="Bruce D."/>
            <person name="Han C."/>
            <person name="Schmutz J."/>
            <person name="Larimer F."/>
            <person name="Land M.L."/>
            <person name="Hauser L."/>
            <person name="Kyrpides N."/>
            <person name="Mikhailova N."/>
            <person name="Ye Q."/>
            <person name="Zhou J."/>
            <person name="Richardson P."/>
            <person name="Fields M.W."/>
        </authorList>
    </citation>
    <scope>NUCLEOTIDE SEQUENCE [LARGE SCALE GENOMIC DNA]</scope>
    <source>
        <strain>QYMF</strain>
    </source>
</reference>
<sequence>MRIYIEEDYEKMSKKAALIVASQIILNPQSVLGLATGSTPVGMYQALVEMYEKDDIDFSEVTTINLDEYYGLSKDNPQSYYSYMMENLFNYINVAKERIHIPNGMARNVVQECLGYEEQIRIAGGIDLQVLGIGANGHIGFNEPSNKLNIRTHLVDLSLETIEDNSRFFENKAEVPRQALSIGIATIMKANQIILLASGASKAEAIREMTSGHLNTQVPASVLQTHPNVSLIIDKDAARLIE</sequence>
<organism>
    <name type="scientific">Alkaliphilus metalliredigens (strain QYMF)</name>
    <dbReference type="NCBI Taxonomy" id="293826"/>
    <lineage>
        <taxon>Bacteria</taxon>
        <taxon>Bacillati</taxon>
        <taxon>Bacillota</taxon>
        <taxon>Clostridia</taxon>
        <taxon>Peptostreptococcales</taxon>
        <taxon>Natronincolaceae</taxon>
        <taxon>Alkaliphilus</taxon>
    </lineage>
</organism>
<proteinExistence type="inferred from homology"/>
<protein>
    <recommendedName>
        <fullName evidence="1">Glucosamine-6-phosphate deaminase</fullName>
        <ecNumber evidence="1">3.5.99.6</ecNumber>
    </recommendedName>
    <alternativeName>
        <fullName evidence="1">GlcN6P deaminase</fullName>
        <shortName evidence="1">GNPDA</shortName>
    </alternativeName>
    <alternativeName>
        <fullName evidence="1">Glucosamine-6-phosphate isomerase</fullName>
    </alternativeName>
</protein>
<feature type="chain" id="PRO_1000066950" description="Glucosamine-6-phosphate deaminase">
    <location>
        <begin position="1"/>
        <end position="242"/>
    </location>
</feature>
<feature type="active site" description="Proton acceptor; for enolization step" evidence="1">
    <location>
        <position position="67"/>
    </location>
</feature>
<feature type="active site" description="For ring-opening step" evidence="1">
    <location>
        <position position="136"/>
    </location>
</feature>
<feature type="active site" description="Proton acceptor; for ring-opening step" evidence="1">
    <location>
        <position position="138"/>
    </location>
</feature>
<feature type="active site" description="For ring-opening step" evidence="1">
    <location>
        <position position="143"/>
    </location>
</feature>
<comment type="function">
    <text evidence="1">Catalyzes the reversible isomerization-deamination of glucosamine 6-phosphate (GlcN6P) to form fructose 6-phosphate (Fru6P) and ammonium ion.</text>
</comment>
<comment type="catalytic activity">
    <reaction evidence="1">
        <text>alpha-D-glucosamine 6-phosphate + H2O = beta-D-fructose 6-phosphate + NH4(+)</text>
        <dbReference type="Rhea" id="RHEA:12172"/>
        <dbReference type="ChEBI" id="CHEBI:15377"/>
        <dbReference type="ChEBI" id="CHEBI:28938"/>
        <dbReference type="ChEBI" id="CHEBI:57634"/>
        <dbReference type="ChEBI" id="CHEBI:75989"/>
        <dbReference type="EC" id="3.5.99.6"/>
    </reaction>
</comment>
<comment type="pathway">
    <text evidence="1">Amino-sugar metabolism; N-acetylneuraminate degradation; D-fructose 6-phosphate from N-acetylneuraminate: step 5/5.</text>
</comment>
<comment type="similarity">
    <text evidence="1">Belongs to the glucosamine/galactosamine-6-phosphate isomerase family. NagB subfamily.</text>
</comment>
<keyword id="KW-0119">Carbohydrate metabolism</keyword>
<keyword id="KW-0378">Hydrolase</keyword>
<keyword id="KW-1185">Reference proteome</keyword>
<dbReference type="EC" id="3.5.99.6" evidence="1"/>
<dbReference type="EMBL" id="CP000724">
    <property type="protein sequence ID" value="ABR50263.1"/>
    <property type="molecule type" value="Genomic_DNA"/>
</dbReference>
<dbReference type="RefSeq" id="WP_012065211.1">
    <property type="nucleotide sequence ID" value="NC_009633.1"/>
</dbReference>
<dbReference type="SMR" id="A6TVP5"/>
<dbReference type="STRING" id="293826.Amet_4182"/>
<dbReference type="KEGG" id="amt:Amet_4182"/>
<dbReference type="eggNOG" id="COG0363">
    <property type="taxonomic scope" value="Bacteria"/>
</dbReference>
<dbReference type="HOGENOM" id="CLU_049611_1_1_9"/>
<dbReference type="OrthoDB" id="9791139at2"/>
<dbReference type="UniPathway" id="UPA00629">
    <property type="reaction ID" value="UER00684"/>
</dbReference>
<dbReference type="Proteomes" id="UP000001572">
    <property type="component" value="Chromosome"/>
</dbReference>
<dbReference type="GO" id="GO:0005737">
    <property type="term" value="C:cytoplasm"/>
    <property type="evidence" value="ECO:0007669"/>
    <property type="project" value="TreeGrafter"/>
</dbReference>
<dbReference type="GO" id="GO:0004342">
    <property type="term" value="F:glucosamine-6-phosphate deaminase activity"/>
    <property type="evidence" value="ECO:0007669"/>
    <property type="project" value="UniProtKB-UniRule"/>
</dbReference>
<dbReference type="GO" id="GO:0042802">
    <property type="term" value="F:identical protein binding"/>
    <property type="evidence" value="ECO:0007669"/>
    <property type="project" value="TreeGrafter"/>
</dbReference>
<dbReference type="GO" id="GO:0005975">
    <property type="term" value="P:carbohydrate metabolic process"/>
    <property type="evidence" value="ECO:0007669"/>
    <property type="project" value="InterPro"/>
</dbReference>
<dbReference type="GO" id="GO:0006043">
    <property type="term" value="P:glucosamine catabolic process"/>
    <property type="evidence" value="ECO:0007669"/>
    <property type="project" value="TreeGrafter"/>
</dbReference>
<dbReference type="GO" id="GO:0006046">
    <property type="term" value="P:N-acetylglucosamine catabolic process"/>
    <property type="evidence" value="ECO:0007669"/>
    <property type="project" value="TreeGrafter"/>
</dbReference>
<dbReference type="GO" id="GO:0019262">
    <property type="term" value="P:N-acetylneuraminate catabolic process"/>
    <property type="evidence" value="ECO:0007669"/>
    <property type="project" value="UniProtKB-UniRule"/>
</dbReference>
<dbReference type="CDD" id="cd01399">
    <property type="entry name" value="GlcN6P_deaminase"/>
    <property type="match status" value="1"/>
</dbReference>
<dbReference type="FunFam" id="3.40.50.1360:FF:000003">
    <property type="entry name" value="Glucosamine-6-phosphate deaminase"/>
    <property type="match status" value="1"/>
</dbReference>
<dbReference type="Gene3D" id="3.40.50.1360">
    <property type="match status" value="1"/>
</dbReference>
<dbReference type="HAMAP" id="MF_01241">
    <property type="entry name" value="GlcN6P_deamin"/>
    <property type="match status" value="1"/>
</dbReference>
<dbReference type="InterPro" id="IPR006148">
    <property type="entry name" value="Glc/Gal-6P_isomerase"/>
</dbReference>
<dbReference type="InterPro" id="IPR004547">
    <property type="entry name" value="Glucosamine6P_isomerase"/>
</dbReference>
<dbReference type="InterPro" id="IPR018321">
    <property type="entry name" value="Glucosamine6P_isomerase_CS"/>
</dbReference>
<dbReference type="InterPro" id="IPR037171">
    <property type="entry name" value="NagB/RpiA_transferase-like"/>
</dbReference>
<dbReference type="NCBIfam" id="TIGR00502">
    <property type="entry name" value="nagB"/>
    <property type="match status" value="1"/>
</dbReference>
<dbReference type="PANTHER" id="PTHR11280">
    <property type="entry name" value="GLUCOSAMINE-6-PHOSPHATE ISOMERASE"/>
    <property type="match status" value="1"/>
</dbReference>
<dbReference type="PANTHER" id="PTHR11280:SF5">
    <property type="entry name" value="GLUCOSAMINE-6-PHOSPHATE ISOMERASE"/>
    <property type="match status" value="1"/>
</dbReference>
<dbReference type="Pfam" id="PF01182">
    <property type="entry name" value="Glucosamine_iso"/>
    <property type="match status" value="1"/>
</dbReference>
<dbReference type="SUPFAM" id="SSF100950">
    <property type="entry name" value="NagB/RpiA/CoA transferase-like"/>
    <property type="match status" value="1"/>
</dbReference>
<dbReference type="PROSITE" id="PS01161">
    <property type="entry name" value="GLC_GALNAC_ISOMERASE"/>
    <property type="match status" value="1"/>
</dbReference>
<evidence type="ECO:0000255" key="1">
    <source>
        <dbReference type="HAMAP-Rule" id="MF_01241"/>
    </source>
</evidence>
<gene>
    <name evidence="1" type="primary">nagB</name>
    <name type="ordered locus">Amet_4182</name>
</gene>
<name>NAGB_ALKMQ</name>
<accession>A6TVP5</accession>